<keyword id="KW-0067">ATP-binding</keyword>
<keyword id="KW-0227">DNA damage</keyword>
<keyword id="KW-0234">DNA repair</keyword>
<keyword id="KW-0238">DNA-binding</keyword>
<keyword id="KW-0547">Nucleotide-binding</keyword>
<keyword id="KW-1185">Reference proteome</keyword>
<protein>
    <recommendedName>
        <fullName evidence="1">DNA mismatch repair protein MutS</fullName>
    </recommendedName>
</protein>
<sequence length="905" mass="101578">MTNPSPKLTPMFEQYLRIKEDYPDALLFYRMGDFYELFFDDAETTARELQIALTCRNPNAELKAPMCGVPYHAVEGYISQLLDKGYRVAICEQIEDPKEAKGLVKRAVTRVLTPGTVIDDANLDAKEHNYLGALFWNQDAEAGAFAWVDVSTGEWSGLYSRKLAELWQWAQKMAPRELLLPEGVDTPAMATLGTTQTVRVPARSHFDLKSGTERVMRAQGVADLGSLGLEGKPELVRACAALLAYLAQTQKQELSHLAPFKPLNLGRHLIIDEVTERNLELFHRLDGRKGPGTLWHILDRTLTPMGGRLLEERMHHPWREASPIRETQQVVEWLFQDDVRREALRTALDLVYDLERLSTRIFLNRATPKDFIALRQSLSALPAVRATLERPANPEGTYPTDAETSGDTLPKPLSDMLSAWDDLADYADLLRRALTDNPPHLVTEGGLFRPGFDPDLDELLDLAEHGEARLQELLAEEQTVSGLPKLKLGYNRVFGYFFELSRAGADSVPEHFVRRQTLANAERFTTERLKELEEKLVSATDRRKTLEYRLFQSLRDTVAEARPRVLFMADMLAHLDFWQSLADVARRNGWVRPDVHTGHDIVIREGRHPVVEAMQGSASFVPNDLRMDEKRRLLLITGPNMAGKSTVLRQTAIICLLAQMGAFVPAREASIGIADRIFSRVGASDNLAQGQSTFMVEMMETARILRQASKRSLVILDEIGRGTSTFDGMALAWAVVEELTRRAGGGIRTLFATHYHEITSLEGRIPGVHNMNIAIREWNGDIVFLRRLVPGPADKSYGIEVARLAGVPHSVVQRARELLADLERTRDAARGTNSAPSRQTLPGLDLPSKQEQVDTIVAPPPCSGVEHPLLVALRDIDTDDMTPLEALKRITEWKQLWGTTREDRS</sequence>
<organism>
    <name type="scientific">Nitratidesulfovibrio vulgaris (strain ATCC 29579 / DSM 644 / CCUG 34227 / NCIMB 8303 / VKM B-1760 / Hildenborough)</name>
    <name type="common">Desulfovibrio vulgaris</name>
    <dbReference type="NCBI Taxonomy" id="882"/>
    <lineage>
        <taxon>Bacteria</taxon>
        <taxon>Pseudomonadati</taxon>
        <taxon>Thermodesulfobacteriota</taxon>
        <taxon>Desulfovibrionia</taxon>
        <taxon>Desulfovibrionales</taxon>
        <taxon>Desulfovibrionaceae</taxon>
        <taxon>Nitratidesulfovibrio</taxon>
    </lineage>
</organism>
<dbReference type="EMBL" id="AE017285">
    <property type="protein sequence ID" value="AAS96126.1"/>
    <property type="molecule type" value="Genomic_DNA"/>
</dbReference>
<dbReference type="RefSeq" id="WP_010938938.1">
    <property type="nucleotide sequence ID" value="NC_002937.3"/>
</dbReference>
<dbReference type="RefSeq" id="YP_010867.1">
    <property type="nucleotide sequence ID" value="NC_002937.3"/>
</dbReference>
<dbReference type="SMR" id="P61666"/>
<dbReference type="IntAct" id="P61666">
    <property type="interactions" value="1"/>
</dbReference>
<dbReference type="STRING" id="882.DVU_1649"/>
<dbReference type="PaxDb" id="882-DVU_1649"/>
<dbReference type="EnsemblBacteria" id="AAS96126">
    <property type="protein sequence ID" value="AAS96126"/>
    <property type="gene ID" value="DVU_1649"/>
</dbReference>
<dbReference type="KEGG" id="dvu:DVU_1649"/>
<dbReference type="PATRIC" id="fig|882.5.peg.1523"/>
<dbReference type="eggNOG" id="COG0249">
    <property type="taxonomic scope" value="Bacteria"/>
</dbReference>
<dbReference type="HOGENOM" id="CLU_002472_3_1_7"/>
<dbReference type="OrthoDB" id="9802448at2"/>
<dbReference type="PhylomeDB" id="P61666"/>
<dbReference type="Proteomes" id="UP000002194">
    <property type="component" value="Chromosome"/>
</dbReference>
<dbReference type="GO" id="GO:0005829">
    <property type="term" value="C:cytosol"/>
    <property type="evidence" value="ECO:0007669"/>
    <property type="project" value="TreeGrafter"/>
</dbReference>
<dbReference type="GO" id="GO:0005524">
    <property type="term" value="F:ATP binding"/>
    <property type="evidence" value="ECO:0007669"/>
    <property type="project" value="UniProtKB-UniRule"/>
</dbReference>
<dbReference type="GO" id="GO:0140664">
    <property type="term" value="F:ATP-dependent DNA damage sensor activity"/>
    <property type="evidence" value="ECO:0007669"/>
    <property type="project" value="InterPro"/>
</dbReference>
<dbReference type="GO" id="GO:0003684">
    <property type="term" value="F:damaged DNA binding"/>
    <property type="evidence" value="ECO:0007669"/>
    <property type="project" value="UniProtKB-UniRule"/>
</dbReference>
<dbReference type="GO" id="GO:0030983">
    <property type="term" value="F:mismatched DNA binding"/>
    <property type="evidence" value="ECO:0007669"/>
    <property type="project" value="InterPro"/>
</dbReference>
<dbReference type="GO" id="GO:0006298">
    <property type="term" value="P:mismatch repair"/>
    <property type="evidence" value="ECO:0007669"/>
    <property type="project" value="UniProtKB-UniRule"/>
</dbReference>
<dbReference type="CDD" id="cd03284">
    <property type="entry name" value="ABC_MutS1"/>
    <property type="match status" value="1"/>
</dbReference>
<dbReference type="FunFam" id="3.40.1170.10:FF:000001">
    <property type="entry name" value="DNA mismatch repair protein MutS"/>
    <property type="match status" value="1"/>
</dbReference>
<dbReference type="FunFam" id="3.40.50.300:FF:000870">
    <property type="entry name" value="MutS protein homolog 4"/>
    <property type="match status" value="1"/>
</dbReference>
<dbReference type="Gene3D" id="1.10.1420.10">
    <property type="match status" value="2"/>
</dbReference>
<dbReference type="Gene3D" id="3.40.1170.10">
    <property type="entry name" value="DNA repair protein MutS, domain I"/>
    <property type="match status" value="1"/>
</dbReference>
<dbReference type="Gene3D" id="3.30.420.110">
    <property type="entry name" value="MutS, connector domain"/>
    <property type="match status" value="1"/>
</dbReference>
<dbReference type="Gene3D" id="3.40.50.300">
    <property type="entry name" value="P-loop containing nucleotide triphosphate hydrolases"/>
    <property type="match status" value="1"/>
</dbReference>
<dbReference type="HAMAP" id="MF_00096">
    <property type="entry name" value="MutS"/>
    <property type="match status" value="1"/>
</dbReference>
<dbReference type="InterPro" id="IPR005748">
    <property type="entry name" value="DNA_mismatch_repair_MutS"/>
</dbReference>
<dbReference type="InterPro" id="IPR007695">
    <property type="entry name" value="DNA_mismatch_repair_MutS-lik_N"/>
</dbReference>
<dbReference type="InterPro" id="IPR017261">
    <property type="entry name" value="DNA_mismatch_repair_MutS/MSH"/>
</dbReference>
<dbReference type="InterPro" id="IPR000432">
    <property type="entry name" value="DNA_mismatch_repair_MutS_C"/>
</dbReference>
<dbReference type="InterPro" id="IPR007861">
    <property type="entry name" value="DNA_mismatch_repair_MutS_clamp"/>
</dbReference>
<dbReference type="InterPro" id="IPR007696">
    <property type="entry name" value="DNA_mismatch_repair_MutS_core"/>
</dbReference>
<dbReference type="InterPro" id="IPR016151">
    <property type="entry name" value="DNA_mismatch_repair_MutS_N"/>
</dbReference>
<dbReference type="InterPro" id="IPR036187">
    <property type="entry name" value="DNA_mismatch_repair_MutS_sf"/>
</dbReference>
<dbReference type="InterPro" id="IPR007860">
    <property type="entry name" value="DNA_mmatch_repair_MutS_con_dom"/>
</dbReference>
<dbReference type="InterPro" id="IPR045076">
    <property type="entry name" value="MutS"/>
</dbReference>
<dbReference type="InterPro" id="IPR036678">
    <property type="entry name" value="MutS_con_dom_sf"/>
</dbReference>
<dbReference type="InterPro" id="IPR027417">
    <property type="entry name" value="P-loop_NTPase"/>
</dbReference>
<dbReference type="NCBIfam" id="TIGR01070">
    <property type="entry name" value="mutS1"/>
    <property type="match status" value="1"/>
</dbReference>
<dbReference type="NCBIfam" id="NF003810">
    <property type="entry name" value="PRK05399.1"/>
    <property type="match status" value="1"/>
</dbReference>
<dbReference type="PANTHER" id="PTHR11361:SF34">
    <property type="entry name" value="DNA MISMATCH REPAIR PROTEIN MSH1, MITOCHONDRIAL"/>
    <property type="match status" value="1"/>
</dbReference>
<dbReference type="PANTHER" id="PTHR11361">
    <property type="entry name" value="DNA MISMATCH REPAIR PROTEIN MUTS FAMILY MEMBER"/>
    <property type="match status" value="1"/>
</dbReference>
<dbReference type="Pfam" id="PF01624">
    <property type="entry name" value="MutS_I"/>
    <property type="match status" value="1"/>
</dbReference>
<dbReference type="Pfam" id="PF05188">
    <property type="entry name" value="MutS_II"/>
    <property type="match status" value="1"/>
</dbReference>
<dbReference type="Pfam" id="PF05192">
    <property type="entry name" value="MutS_III"/>
    <property type="match status" value="1"/>
</dbReference>
<dbReference type="Pfam" id="PF05190">
    <property type="entry name" value="MutS_IV"/>
    <property type="match status" value="1"/>
</dbReference>
<dbReference type="Pfam" id="PF00488">
    <property type="entry name" value="MutS_V"/>
    <property type="match status" value="1"/>
</dbReference>
<dbReference type="PIRSF" id="PIRSF037677">
    <property type="entry name" value="DNA_mis_repair_Msh6"/>
    <property type="match status" value="1"/>
</dbReference>
<dbReference type="SMART" id="SM00534">
    <property type="entry name" value="MUTSac"/>
    <property type="match status" value="1"/>
</dbReference>
<dbReference type="SMART" id="SM00533">
    <property type="entry name" value="MUTSd"/>
    <property type="match status" value="1"/>
</dbReference>
<dbReference type="SUPFAM" id="SSF55271">
    <property type="entry name" value="DNA repair protein MutS, domain I"/>
    <property type="match status" value="1"/>
</dbReference>
<dbReference type="SUPFAM" id="SSF53150">
    <property type="entry name" value="DNA repair protein MutS, domain II"/>
    <property type="match status" value="1"/>
</dbReference>
<dbReference type="SUPFAM" id="SSF48334">
    <property type="entry name" value="DNA repair protein MutS, domain III"/>
    <property type="match status" value="1"/>
</dbReference>
<dbReference type="SUPFAM" id="SSF52540">
    <property type="entry name" value="P-loop containing nucleoside triphosphate hydrolases"/>
    <property type="match status" value="1"/>
</dbReference>
<dbReference type="PROSITE" id="PS00486">
    <property type="entry name" value="DNA_MISMATCH_REPAIR_2"/>
    <property type="match status" value="1"/>
</dbReference>
<proteinExistence type="inferred from homology"/>
<evidence type="ECO:0000255" key="1">
    <source>
        <dbReference type="HAMAP-Rule" id="MF_00096"/>
    </source>
</evidence>
<evidence type="ECO:0000256" key="2">
    <source>
        <dbReference type="SAM" id="MobiDB-lite"/>
    </source>
</evidence>
<name>MUTS_NITV2</name>
<gene>
    <name evidence="1" type="primary">mutS</name>
    <name type="ordered locus">DVU_1649</name>
</gene>
<comment type="function">
    <text evidence="1">This protein is involved in the repair of mismatches in DNA. It is possible that it carries out the mismatch recognition step. This protein has a weak ATPase activity.</text>
</comment>
<comment type="similarity">
    <text evidence="1">Belongs to the DNA mismatch repair MutS family.</text>
</comment>
<accession>P61666</accession>
<feature type="chain" id="PRO_0000115093" description="DNA mismatch repair protein MutS">
    <location>
        <begin position="1"/>
        <end position="905"/>
    </location>
</feature>
<feature type="region of interest" description="Disordered" evidence="2">
    <location>
        <begin position="389"/>
        <end position="410"/>
    </location>
</feature>
<feature type="region of interest" description="Disordered" evidence="2">
    <location>
        <begin position="826"/>
        <end position="847"/>
    </location>
</feature>
<feature type="compositionally biased region" description="Polar residues" evidence="2">
    <location>
        <begin position="831"/>
        <end position="840"/>
    </location>
</feature>
<feature type="binding site" evidence="1">
    <location>
        <begin position="638"/>
        <end position="645"/>
    </location>
    <ligand>
        <name>ATP</name>
        <dbReference type="ChEBI" id="CHEBI:30616"/>
    </ligand>
</feature>
<reference key="1">
    <citation type="journal article" date="2004" name="Nat. Biotechnol.">
        <title>The genome sequence of the anaerobic, sulfate-reducing bacterium Desulfovibrio vulgaris Hildenborough.</title>
        <authorList>
            <person name="Heidelberg J.F."/>
            <person name="Seshadri R."/>
            <person name="Haveman S.A."/>
            <person name="Hemme C.L."/>
            <person name="Paulsen I.T."/>
            <person name="Kolonay J.F."/>
            <person name="Eisen J.A."/>
            <person name="Ward N.L."/>
            <person name="Methe B.A."/>
            <person name="Brinkac L.M."/>
            <person name="Daugherty S.C."/>
            <person name="DeBoy R.T."/>
            <person name="Dodson R.J."/>
            <person name="Durkin A.S."/>
            <person name="Madupu R."/>
            <person name="Nelson W.C."/>
            <person name="Sullivan S.A."/>
            <person name="Fouts D.E."/>
            <person name="Haft D.H."/>
            <person name="Selengut J."/>
            <person name="Peterson J.D."/>
            <person name="Davidsen T.M."/>
            <person name="Zafar N."/>
            <person name="Zhou L."/>
            <person name="Radune D."/>
            <person name="Dimitrov G."/>
            <person name="Hance M."/>
            <person name="Tran K."/>
            <person name="Khouri H.M."/>
            <person name="Gill J."/>
            <person name="Utterback T.R."/>
            <person name="Feldblyum T.V."/>
            <person name="Wall J.D."/>
            <person name="Voordouw G."/>
            <person name="Fraser C.M."/>
        </authorList>
    </citation>
    <scope>NUCLEOTIDE SEQUENCE [LARGE SCALE GENOMIC DNA]</scope>
    <source>
        <strain>ATCC 29579 / DSM 644 / CCUG 34227 / NCIMB 8303 / VKM B-1760 / Hildenborough</strain>
    </source>
</reference>